<sequence length="404" mass="45362">MAQQGKVEPQDQDSFLDDQPGIRPIPSFDDMPLHQNLLRGIYSHGFEKPSSIQQRAIVPFTRGGDIIAQAQSGTGKTGAFSIGLLQRLDFRHNVLQGLVLSPTRELAMQTAEVITRIGEFLAEGSSSFCATFVGGTRVQDDYRKLQSGTIVAVGTPGRVVDVTKRGAMRTESLRVLVLDEADEMLSQGFAEQIYDIFRFLPKEIQVALFSATMPDDVLELTKKFMRDPTRILVKRESLTLEGIKQFFIAVEEEHKLDTLMDLYETVSIAQSVIFANTRRKVDWLASQLNSSNHTVSCMHSEMSKQEREKVMGTFRNGSSRVLVTTDLVARGIDVHHVNIVINFDLPTNKENYLHRIGRGGRYGRKGVAINFVTQKDVEVLREIESHYHTQIEELPVDFAAYLGE</sequence>
<keyword id="KW-0067">ATP-binding</keyword>
<keyword id="KW-0347">Helicase</keyword>
<keyword id="KW-0378">Hydrolase</keyword>
<keyword id="KW-0396">Initiation factor</keyword>
<keyword id="KW-0547">Nucleotide-binding</keyword>
<keyword id="KW-0648">Protein biosynthesis</keyword>
<keyword id="KW-1185">Reference proteome</keyword>
<keyword id="KW-0694">RNA-binding</keyword>
<reference key="1">
    <citation type="journal article" date="2005" name="Science">
        <title>The genome of the African trypanosome Trypanosoma brucei.</title>
        <authorList>
            <person name="Berriman M."/>
            <person name="Ghedin E."/>
            <person name="Hertz-Fowler C."/>
            <person name="Blandin G."/>
            <person name="Renauld H."/>
            <person name="Bartholomeu D.C."/>
            <person name="Lennard N.J."/>
            <person name="Caler E."/>
            <person name="Hamlin N.E."/>
            <person name="Haas B."/>
            <person name="Bohme U."/>
            <person name="Hannick L."/>
            <person name="Aslett M.A."/>
            <person name="Shallom J."/>
            <person name="Marcello L."/>
            <person name="Hou L."/>
            <person name="Wickstead B."/>
            <person name="Alsmark U.C.M."/>
            <person name="Arrowsmith C."/>
            <person name="Atkin R.J."/>
            <person name="Barron A.J."/>
            <person name="Bringaud F."/>
            <person name="Brooks K."/>
            <person name="Carrington M."/>
            <person name="Cherevach I."/>
            <person name="Chillingworth T.J."/>
            <person name="Churcher C."/>
            <person name="Clark L.N."/>
            <person name="Corton C.H."/>
            <person name="Cronin A."/>
            <person name="Davies R.M."/>
            <person name="Doggett J."/>
            <person name="Djikeng A."/>
            <person name="Feldblyum T."/>
            <person name="Field M.C."/>
            <person name="Fraser A."/>
            <person name="Goodhead I."/>
            <person name="Hance Z."/>
            <person name="Harper D."/>
            <person name="Harris B.R."/>
            <person name="Hauser H."/>
            <person name="Hostetler J."/>
            <person name="Ivens A."/>
            <person name="Jagels K."/>
            <person name="Johnson D."/>
            <person name="Johnson J."/>
            <person name="Jones K."/>
            <person name="Kerhornou A.X."/>
            <person name="Koo H."/>
            <person name="Larke N."/>
            <person name="Landfear S."/>
            <person name="Larkin C."/>
            <person name="Leech V."/>
            <person name="Line A."/>
            <person name="Lord A."/>
            <person name="Macleod A."/>
            <person name="Mooney P.J."/>
            <person name="Moule S."/>
            <person name="Martin D.M."/>
            <person name="Morgan G.W."/>
            <person name="Mungall K."/>
            <person name="Norbertczak H."/>
            <person name="Ormond D."/>
            <person name="Pai G."/>
            <person name="Peacock C.S."/>
            <person name="Peterson J."/>
            <person name="Quail M.A."/>
            <person name="Rabbinowitsch E."/>
            <person name="Rajandream M.A."/>
            <person name="Reitter C."/>
            <person name="Salzberg S.L."/>
            <person name="Sanders M."/>
            <person name="Schobel S."/>
            <person name="Sharp S."/>
            <person name="Simmonds M."/>
            <person name="Simpson A.J."/>
            <person name="Tallon L."/>
            <person name="Turner C.M."/>
            <person name="Tait A."/>
            <person name="Tivey A.R."/>
            <person name="Van Aken S."/>
            <person name="Walker D."/>
            <person name="Wanless D."/>
            <person name="Wang S."/>
            <person name="White B."/>
            <person name="White O."/>
            <person name="Whitehead S."/>
            <person name="Woodward J."/>
            <person name="Wortman J."/>
            <person name="Adams M.D."/>
            <person name="Embley T.M."/>
            <person name="Gull K."/>
            <person name="Ullu E."/>
            <person name="Barry J.D."/>
            <person name="Fairlamb A.H."/>
            <person name="Opperdoes F."/>
            <person name="Barrell B.G."/>
            <person name="Donelson J.E."/>
            <person name="Hall N."/>
            <person name="Fraser C.M."/>
            <person name="Melville S.E."/>
            <person name="El-Sayed N.M.A."/>
        </authorList>
    </citation>
    <scope>NUCLEOTIDE SEQUENCE [LARGE SCALE GENOMIC DNA]</scope>
    <source>
        <strain evidence="6">927/4 GUTat10.1</strain>
    </source>
</reference>
<feature type="chain" id="PRO_0000291644" description="Probable eukaryotic initiation factor 4A">
    <location>
        <begin position="1"/>
        <end position="404"/>
    </location>
</feature>
<feature type="domain" description="Helicase ATP-binding" evidence="2">
    <location>
        <begin position="57"/>
        <end position="231"/>
    </location>
</feature>
<feature type="domain" description="Helicase C-terminal" evidence="3">
    <location>
        <begin position="242"/>
        <end position="402"/>
    </location>
</feature>
<feature type="region of interest" description="Disordered" evidence="4">
    <location>
        <begin position="1"/>
        <end position="28"/>
    </location>
</feature>
<feature type="short sequence motif" description="Q motif">
    <location>
        <begin position="26"/>
        <end position="54"/>
    </location>
</feature>
<feature type="short sequence motif" description="DEAD box">
    <location>
        <begin position="179"/>
        <end position="182"/>
    </location>
</feature>
<feature type="binding site" evidence="2">
    <location>
        <begin position="70"/>
        <end position="77"/>
    </location>
    <ligand>
        <name>ATP</name>
        <dbReference type="ChEBI" id="CHEBI:30616"/>
    </ligand>
</feature>
<proteinExistence type="inferred from homology"/>
<comment type="function">
    <text evidence="1">ATP-dependent RNA helicase which is a subunit of the eIF4F complex involved in cap recognition and is required for mRNA binding to ribosome. In the current model of translation initiation, eIF4A unwinds RNA secondary structures in the 5'-UTR of mRNAs which is necessary to allow efficient binding of the small ribosomal subunit, and subsequent scanning for the initiator codon (By similarity).</text>
</comment>
<comment type="catalytic activity">
    <reaction>
        <text>ATP + H2O = ADP + phosphate + H(+)</text>
        <dbReference type="Rhea" id="RHEA:13065"/>
        <dbReference type="ChEBI" id="CHEBI:15377"/>
        <dbReference type="ChEBI" id="CHEBI:15378"/>
        <dbReference type="ChEBI" id="CHEBI:30616"/>
        <dbReference type="ChEBI" id="CHEBI:43474"/>
        <dbReference type="ChEBI" id="CHEBI:456216"/>
        <dbReference type="EC" id="3.6.4.13"/>
    </reaction>
</comment>
<comment type="subunit">
    <text evidence="1">eIF4F is a multi-subunit complex, the composition of which varies with external and internal environmental conditions. It is composed of at least EIF4A, EIF4E and EIF4G (By similarity).</text>
</comment>
<comment type="similarity">
    <text evidence="5">Belongs to the DEAD box helicase family. eIF4A subfamily.</text>
</comment>
<evidence type="ECO:0000250" key="1"/>
<evidence type="ECO:0000255" key="2">
    <source>
        <dbReference type="PROSITE-ProRule" id="PRU00541"/>
    </source>
</evidence>
<evidence type="ECO:0000255" key="3">
    <source>
        <dbReference type="PROSITE-ProRule" id="PRU00542"/>
    </source>
</evidence>
<evidence type="ECO:0000256" key="4">
    <source>
        <dbReference type="SAM" id="MobiDB-lite"/>
    </source>
</evidence>
<evidence type="ECO:0000305" key="5"/>
<evidence type="ECO:0000312" key="6">
    <source>
        <dbReference type="Proteomes" id="UP000008524"/>
    </source>
</evidence>
<gene>
    <name type="ORF">Tb09.160.3270</name>
</gene>
<protein>
    <recommendedName>
        <fullName>Probable eukaryotic initiation factor 4A</fullName>
        <shortName>eIF-4A</shortName>
        <ecNumber>3.6.4.13</ecNumber>
    </recommendedName>
    <alternativeName>
        <fullName>ATP-dependent RNA helicase eIF4A</fullName>
    </alternativeName>
</protein>
<name>IF4A_TRYB2</name>
<organism>
    <name type="scientific">Trypanosoma brucei brucei (strain 927/4 GUTat10.1)</name>
    <dbReference type="NCBI Taxonomy" id="185431"/>
    <lineage>
        <taxon>Eukaryota</taxon>
        <taxon>Discoba</taxon>
        <taxon>Euglenozoa</taxon>
        <taxon>Kinetoplastea</taxon>
        <taxon>Metakinetoplastina</taxon>
        <taxon>Trypanosomatida</taxon>
        <taxon>Trypanosomatidae</taxon>
        <taxon>Trypanosoma</taxon>
    </lineage>
</organism>
<dbReference type="EC" id="3.6.4.13"/>
<dbReference type="EMBL" id="CM000207">
    <property type="protein sequence ID" value="EAN76544.1"/>
    <property type="molecule type" value="Genomic_DNA"/>
</dbReference>
<dbReference type="RefSeq" id="XP_803774.1">
    <property type="nucleotide sequence ID" value="XM_798681.1"/>
</dbReference>
<dbReference type="SMR" id="Q38F76"/>
<dbReference type="FunCoup" id="Q38F76">
    <property type="interactions" value="383"/>
</dbReference>
<dbReference type="STRING" id="185431.Q38F76"/>
<dbReference type="PaxDb" id="5691-EAN76544"/>
<dbReference type="GeneID" id="3660503"/>
<dbReference type="KEGG" id="tbr:Tb09.160.3270"/>
<dbReference type="VEuPathDB" id="TriTrypDB:Tb927.9.4680"/>
<dbReference type="eggNOG" id="KOG0328">
    <property type="taxonomic scope" value="Eukaryota"/>
</dbReference>
<dbReference type="InParanoid" id="Q38F76"/>
<dbReference type="OMA" id="FGCQALV"/>
<dbReference type="OrthoDB" id="10265785at2759"/>
<dbReference type="Proteomes" id="UP000008524">
    <property type="component" value="Chromosome 9"/>
</dbReference>
<dbReference type="GO" id="GO:0005737">
    <property type="term" value="C:cytoplasm"/>
    <property type="evidence" value="ECO:0000247"/>
    <property type="project" value="GeneDB"/>
</dbReference>
<dbReference type="GO" id="GO:0010494">
    <property type="term" value="C:cytoplasmic stress granule"/>
    <property type="evidence" value="ECO:0000318"/>
    <property type="project" value="GO_Central"/>
</dbReference>
<dbReference type="GO" id="GO:0005829">
    <property type="term" value="C:cytosol"/>
    <property type="evidence" value="ECO:0000247"/>
    <property type="project" value="GeneDB"/>
</dbReference>
<dbReference type="GO" id="GO:0016281">
    <property type="term" value="C:eukaryotic translation initiation factor 4F complex"/>
    <property type="evidence" value="ECO:0000266"/>
    <property type="project" value="GeneDB"/>
</dbReference>
<dbReference type="GO" id="GO:0005524">
    <property type="term" value="F:ATP binding"/>
    <property type="evidence" value="ECO:0007669"/>
    <property type="project" value="UniProtKB-KW"/>
</dbReference>
<dbReference type="GO" id="GO:0016887">
    <property type="term" value="F:ATP hydrolysis activity"/>
    <property type="evidence" value="ECO:0007669"/>
    <property type="project" value="RHEA"/>
</dbReference>
<dbReference type="GO" id="GO:0008186">
    <property type="term" value="F:ATP-dependent activity, acting on RNA"/>
    <property type="evidence" value="ECO:0000266"/>
    <property type="project" value="GeneDB"/>
</dbReference>
<dbReference type="GO" id="GO:0003729">
    <property type="term" value="F:mRNA binding"/>
    <property type="evidence" value="ECO:0000314"/>
    <property type="project" value="GeneDB"/>
</dbReference>
<dbReference type="GO" id="GO:0003724">
    <property type="term" value="F:RNA helicase activity"/>
    <property type="evidence" value="ECO:0007669"/>
    <property type="project" value="UniProtKB-EC"/>
</dbReference>
<dbReference type="GO" id="GO:0003743">
    <property type="term" value="F:translation initiation factor activity"/>
    <property type="evidence" value="ECO:0000318"/>
    <property type="project" value="GO_Central"/>
</dbReference>
<dbReference type="GO" id="GO:0002183">
    <property type="term" value="P:cytoplasmic translational initiation"/>
    <property type="evidence" value="ECO:0000318"/>
    <property type="project" value="GO_Central"/>
</dbReference>
<dbReference type="CDD" id="cd17939">
    <property type="entry name" value="DEADc_EIF4A"/>
    <property type="match status" value="1"/>
</dbReference>
<dbReference type="CDD" id="cd18787">
    <property type="entry name" value="SF2_C_DEAD"/>
    <property type="match status" value="1"/>
</dbReference>
<dbReference type="FunFam" id="3.40.50.300:FF:000849">
    <property type="entry name" value="ATP-dependent RNA helicase DBP5"/>
    <property type="match status" value="1"/>
</dbReference>
<dbReference type="FunFam" id="3.40.50.300:FF:000031">
    <property type="entry name" value="Eukaryotic initiation factor 4A-III"/>
    <property type="match status" value="1"/>
</dbReference>
<dbReference type="Gene3D" id="3.40.50.300">
    <property type="entry name" value="P-loop containing nucleotide triphosphate hydrolases"/>
    <property type="match status" value="2"/>
</dbReference>
<dbReference type="InterPro" id="IPR011545">
    <property type="entry name" value="DEAD/DEAH_box_helicase_dom"/>
</dbReference>
<dbReference type="InterPro" id="IPR014001">
    <property type="entry name" value="Helicase_ATP-bd"/>
</dbReference>
<dbReference type="InterPro" id="IPR001650">
    <property type="entry name" value="Helicase_C-like"/>
</dbReference>
<dbReference type="InterPro" id="IPR027417">
    <property type="entry name" value="P-loop_NTPase"/>
</dbReference>
<dbReference type="InterPro" id="IPR000629">
    <property type="entry name" value="RNA-helicase_DEAD-box_CS"/>
</dbReference>
<dbReference type="InterPro" id="IPR014014">
    <property type="entry name" value="RNA_helicase_DEAD_Q_motif"/>
</dbReference>
<dbReference type="PANTHER" id="PTHR47958">
    <property type="entry name" value="ATP-DEPENDENT RNA HELICASE DBP3"/>
    <property type="match status" value="1"/>
</dbReference>
<dbReference type="Pfam" id="PF00270">
    <property type="entry name" value="DEAD"/>
    <property type="match status" value="1"/>
</dbReference>
<dbReference type="Pfam" id="PF00271">
    <property type="entry name" value="Helicase_C"/>
    <property type="match status" value="1"/>
</dbReference>
<dbReference type="SMART" id="SM00487">
    <property type="entry name" value="DEXDc"/>
    <property type="match status" value="1"/>
</dbReference>
<dbReference type="SMART" id="SM00490">
    <property type="entry name" value="HELICc"/>
    <property type="match status" value="1"/>
</dbReference>
<dbReference type="SUPFAM" id="SSF52540">
    <property type="entry name" value="P-loop containing nucleoside triphosphate hydrolases"/>
    <property type="match status" value="1"/>
</dbReference>
<dbReference type="PROSITE" id="PS00039">
    <property type="entry name" value="DEAD_ATP_HELICASE"/>
    <property type="match status" value="1"/>
</dbReference>
<dbReference type="PROSITE" id="PS51192">
    <property type="entry name" value="HELICASE_ATP_BIND_1"/>
    <property type="match status" value="1"/>
</dbReference>
<dbReference type="PROSITE" id="PS51194">
    <property type="entry name" value="HELICASE_CTER"/>
    <property type="match status" value="1"/>
</dbReference>
<dbReference type="PROSITE" id="PS51195">
    <property type="entry name" value="Q_MOTIF"/>
    <property type="match status" value="1"/>
</dbReference>
<accession>Q38F76</accession>